<evidence type="ECO:0000250" key="1"/>
<evidence type="ECO:0000255" key="2">
    <source>
        <dbReference type="PROSITE-ProRule" id="PRU00798"/>
    </source>
</evidence>
<evidence type="ECO:0000269" key="3">
    <source>
    </source>
</evidence>
<keyword id="KW-0903">Direct protein sequencing</keyword>
<keyword id="KW-1015">Disulfide bond</keyword>
<keyword id="KW-0646">Protease inhibitor</keyword>
<keyword id="KW-0964">Secreted</keyword>
<dbReference type="SMR" id="P83579"/>
<dbReference type="MEROPS" id="I01.035"/>
<dbReference type="GO" id="GO:0005576">
    <property type="term" value="C:extracellular region"/>
    <property type="evidence" value="ECO:0000314"/>
    <property type="project" value="UniProtKB"/>
</dbReference>
<dbReference type="GO" id="GO:0030414">
    <property type="term" value="F:peptidase inhibitor activity"/>
    <property type="evidence" value="ECO:0007669"/>
    <property type="project" value="UniProtKB-KW"/>
</dbReference>
<dbReference type="CDD" id="cd00104">
    <property type="entry name" value="KAZAL_FS"/>
    <property type="match status" value="1"/>
</dbReference>
<dbReference type="FunFam" id="3.30.60.30:FF:000147">
    <property type="entry name" value="Proteinase inhibitor PSKP-1"/>
    <property type="match status" value="1"/>
</dbReference>
<dbReference type="Gene3D" id="3.30.60.30">
    <property type="match status" value="1"/>
</dbReference>
<dbReference type="InterPro" id="IPR002350">
    <property type="entry name" value="Kazal_dom"/>
</dbReference>
<dbReference type="InterPro" id="IPR036058">
    <property type="entry name" value="Kazal_dom_sf"/>
</dbReference>
<dbReference type="Pfam" id="PF00050">
    <property type="entry name" value="Kazal_1"/>
    <property type="match status" value="1"/>
</dbReference>
<dbReference type="SMART" id="SM00280">
    <property type="entry name" value="KAZAL"/>
    <property type="match status" value="1"/>
</dbReference>
<dbReference type="SUPFAM" id="SSF100895">
    <property type="entry name" value="Kazal-type serine protease inhibitors"/>
    <property type="match status" value="1"/>
</dbReference>
<dbReference type="PROSITE" id="PS00282">
    <property type="entry name" value="KAZAL_1"/>
    <property type="match status" value="1"/>
</dbReference>
<dbReference type="PROSITE" id="PS51465">
    <property type="entry name" value="KAZAL_2"/>
    <property type="match status" value="1"/>
</dbReference>
<organism>
    <name type="scientific">Phyllomedusa sauvagei</name>
    <name type="common">Sauvage's leaf frog</name>
    <dbReference type="NCBI Taxonomy" id="8395"/>
    <lineage>
        <taxon>Eukaryota</taxon>
        <taxon>Metazoa</taxon>
        <taxon>Chordata</taxon>
        <taxon>Craniata</taxon>
        <taxon>Vertebrata</taxon>
        <taxon>Euteleostomi</taxon>
        <taxon>Amphibia</taxon>
        <taxon>Batrachia</taxon>
        <taxon>Anura</taxon>
        <taxon>Neobatrachia</taxon>
        <taxon>Hyloidea</taxon>
        <taxon>Hylidae</taxon>
        <taxon>Phyllomedusinae</taxon>
        <taxon>Phyllomedusa</taxon>
    </lineage>
</organism>
<comment type="function">
    <text evidence="1">May have a role in mucosal defense against microbes by interacting directly with their membranes.</text>
</comment>
<comment type="subcellular location">
    <subcellularLocation>
        <location evidence="3">Secreted</location>
    </subcellularLocation>
</comment>
<comment type="tissue specificity">
    <text>Skin.</text>
</comment>
<comment type="mass spectrometry" mass="7185.3" method="Electrospray" evidence="3"/>
<accession>P83579</accession>
<sequence length="58" mass="6555">VIEPDCKKYEGKKCPPDIALVCGTNGREYYNECALCVFIRDSTLKADKAIKIKKWGKC</sequence>
<reference key="1">
    <citation type="journal article" date="2004" name="Eur. J. Biochem.">
        <title>A Kazal prolyl endopeptidase inhibitor isolated from the skin of Phyllomedusa sauvagii.</title>
        <authorList>
            <person name="Gebhard L.G."/>
            <person name="Carrizo F.U."/>
            <person name="Stern A.L."/>
            <person name="Burgardt N.I."/>
            <person name="Faivovich J."/>
            <person name="Lavilla E."/>
            <person name="Ermacora M.R."/>
        </authorList>
    </citation>
    <scope>PROTEIN SEQUENCE</scope>
    <scope>SUBCELLULAR LOCATION</scope>
    <scope>MASS SPECTROMETRY</scope>
    <source>
        <tissue>Skin</tissue>
    </source>
</reference>
<name>IKP2_PHYSA</name>
<proteinExistence type="evidence at protein level"/>
<protein>
    <recommendedName>
        <fullName>Proteinase inhibitor PSKP-2</fullName>
    </recommendedName>
</protein>
<feature type="chain" id="PRO_0000073044" description="Proteinase inhibitor PSKP-2">
    <location>
        <begin position="1"/>
        <end position="58"/>
    </location>
</feature>
<feature type="domain" description="Kazal-like" evidence="2">
    <location>
        <begin position="1"/>
        <end position="58"/>
    </location>
</feature>
<feature type="disulfide bond" evidence="2">
    <location>
        <begin position="6"/>
        <end position="36"/>
    </location>
</feature>
<feature type="disulfide bond" evidence="2">
    <location>
        <begin position="14"/>
        <end position="33"/>
    </location>
</feature>
<feature type="disulfide bond" evidence="2">
    <location>
        <begin position="22"/>
        <end position="58"/>
    </location>
</feature>
<feature type="unsure residue">
    <location>
        <begin position="47"/>
        <end position="58"/>
    </location>
</feature>